<reference key="1">
    <citation type="journal article" date="2001" name="Lancet">
        <title>Whole genome sequencing of meticillin-resistant Staphylococcus aureus.</title>
        <authorList>
            <person name="Kuroda M."/>
            <person name="Ohta T."/>
            <person name="Uchiyama I."/>
            <person name="Baba T."/>
            <person name="Yuzawa H."/>
            <person name="Kobayashi I."/>
            <person name="Cui L."/>
            <person name="Oguchi A."/>
            <person name="Aoki K."/>
            <person name="Nagai Y."/>
            <person name="Lian J.-Q."/>
            <person name="Ito T."/>
            <person name="Kanamori M."/>
            <person name="Matsumaru H."/>
            <person name="Maruyama A."/>
            <person name="Murakami H."/>
            <person name="Hosoyama A."/>
            <person name="Mizutani-Ui Y."/>
            <person name="Takahashi N.K."/>
            <person name="Sawano T."/>
            <person name="Inoue R."/>
            <person name="Kaito C."/>
            <person name="Sekimizu K."/>
            <person name="Hirakawa H."/>
            <person name="Kuhara S."/>
            <person name="Goto S."/>
            <person name="Yabuzaki J."/>
            <person name="Kanehisa M."/>
            <person name="Yamashita A."/>
            <person name="Oshima K."/>
            <person name="Furuya K."/>
            <person name="Yoshino C."/>
            <person name="Shiba T."/>
            <person name="Hattori M."/>
            <person name="Ogasawara N."/>
            <person name="Hayashi H."/>
            <person name="Hiramatsu K."/>
        </authorList>
    </citation>
    <scope>NUCLEOTIDE SEQUENCE [LARGE SCALE GENOMIC DNA]</scope>
    <source>
        <strain>Mu50 / ATCC 700699</strain>
    </source>
</reference>
<gene>
    <name type="ordered locus">SAV0681</name>
</gene>
<comment type="similarity">
    <text evidence="1">Belongs to the UPF0178 family.</text>
</comment>
<organism>
    <name type="scientific">Staphylococcus aureus (strain Mu50 / ATCC 700699)</name>
    <dbReference type="NCBI Taxonomy" id="158878"/>
    <lineage>
        <taxon>Bacteria</taxon>
        <taxon>Bacillati</taxon>
        <taxon>Bacillota</taxon>
        <taxon>Bacilli</taxon>
        <taxon>Bacillales</taxon>
        <taxon>Staphylococcaceae</taxon>
        <taxon>Staphylococcus</taxon>
    </lineage>
</organism>
<sequence>MTHIIIDGDACPVVDSIIDLTTETGIFVTIIRSFSHFSNQLYPPHVSTLYVDDGPDAVDYKIVQLSTKDDIVVTQDYGLASLLVDKVLIVMHHNGKIYNSKNIQQLLDKRYINAQIRKQGGRHKGPPPFTKQDQKVFEQSLLKVIHRIKELD</sequence>
<feature type="chain" id="PRO_0000176011" description="UPF0178 protein SAV0681">
    <location>
        <begin position="1"/>
        <end position="152"/>
    </location>
</feature>
<evidence type="ECO:0000305" key="1"/>
<proteinExistence type="inferred from homology"/>
<protein>
    <recommendedName>
        <fullName>UPF0178 protein SAV0681</fullName>
    </recommendedName>
</protein>
<dbReference type="EMBL" id="BA000017">
    <property type="protein sequence ID" value="BAB56843.1"/>
    <property type="molecule type" value="Genomic_DNA"/>
</dbReference>
<dbReference type="RefSeq" id="WP_000148826.1">
    <property type="nucleotide sequence ID" value="NC_002758.2"/>
</dbReference>
<dbReference type="SMR" id="P67336"/>
<dbReference type="KEGG" id="sav:SAV0681"/>
<dbReference type="HOGENOM" id="CLU_106619_0_0_9"/>
<dbReference type="PhylomeDB" id="P67336"/>
<dbReference type="Proteomes" id="UP000002481">
    <property type="component" value="Chromosome"/>
</dbReference>
<dbReference type="HAMAP" id="MF_00489">
    <property type="entry name" value="UPF0178"/>
    <property type="match status" value="1"/>
</dbReference>
<dbReference type="InterPro" id="IPR003791">
    <property type="entry name" value="UPF0178"/>
</dbReference>
<dbReference type="NCBIfam" id="NF001095">
    <property type="entry name" value="PRK00124.1"/>
    <property type="match status" value="1"/>
</dbReference>
<dbReference type="PANTHER" id="PTHR35146">
    <property type="entry name" value="UPF0178 PROTEIN YAII"/>
    <property type="match status" value="1"/>
</dbReference>
<dbReference type="PANTHER" id="PTHR35146:SF1">
    <property type="entry name" value="UPF0178 PROTEIN YAII"/>
    <property type="match status" value="1"/>
</dbReference>
<dbReference type="Pfam" id="PF02639">
    <property type="entry name" value="DUF188"/>
    <property type="match status" value="1"/>
</dbReference>
<accession>P67336</accession>
<accession>Q99VU0</accession>
<name>Y681_STAAM</name>